<keyword id="KW-0548">Nucleotidyltransferase</keyword>
<keyword id="KW-1185">Reference proteome</keyword>
<keyword id="KW-0694">RNA-binding</keyword>
<keyword id="KW-0698">rRNA processing</keyword>
<keyword id="KW-0808">Transferase</keyword>
<keyword id="KW-0819">tRNA processing</keyword>
<keyword id="KW-0820">tRNA-binding</keyword>
<dbReference type="EC" id="2.7.7.56" evidence="1"/>
<dbReference type="EMBL" id="AE014184">
    <property type="protein sequence ID" value="AAO44719.1"/>
    <property type="status" value="ALT_INIT"/>
    <property type="molecule type" value="Genomic_DNA"/>
</dbReference>
<dbReference type="RefSeq" id="WP_033800110.1">
    <property type="nucleotide sequence ID" value="NC_004572.3"/>
</dbReference>
<dbReference type="SMR" id="Q83FT1"/>
<dbReference type="STRING" id="203267.TWT_622"/>
<dbReference type="GeneID" id="67388418"/>
<dbReference type="KEGG" id="twh:TWT_622"/>
<dbReference type="eggNOG" id="COG0689">
    <property type="taxonomic scope" value="Bacteria"/>
</dbReference>
<dbReference type="HOGENOM" id="CLU_050858_0_0_11"/>
<dbReference type="OrthoDB" id="9802265at2"/>
<dbReference type="Proteomes" id="UP000002200">
    <property type="component" value="Chromosome"/>
</dbReference>
<dbReference type="GO" id="GO:0000175">
    <property type="term" value="F:3'-5'-RNA exonuclease activity"/>
    <property type="evidence" value="ECO:0007669"/>
    <property type="project" value="UniProtKB-UniRule"/>
</dbReference>
<dbReference type="GO" id="GO:0000049">
    <property type="term" value="F:tRNA binding"/>
    <property type="evidence" value="ECO:0007669"/>
    <property type="project" value="UniProtKB-UniRule"/>
</dbReference>
<dbReference type="GO" id="GO:0009022">
    <property type="term" value="F:tRNA nucleotidyltransferase activity"/>
    <property type="evidence" value="ECO:0007669"/>
    <property type="project" value="UniProtKB-UniRule"/>
</dbReference>
<dbReference type="GO" id="GO:0016075">
    <property type="term" value="P:rRNA catabolic process"/>
    <property type="evidence" value="ECO:0007669"/>
    <property type="project" value="UniProtKB-UniRule"/>
</dbReference>
<dbReference type="GO" id="GO:0006364">
    <property type="term" value="P:rRNA processing"/>
    <property type="evidence" value="ECO:0007669"/>
    <property type="project" value="UniProtKB-KW"/>
</dbReference>
<dbReference type="GO" id="GO:0008033">
    <property type="term" value="P:tRNA processing"/>
    <property type="evidence" value="ECO:0007669"/>
    <property type="project" value="UniProtKB-UniRule"/>
</dbReference>
<dbReference type="CDD" id="cd11362">
    <property type="entry name" value="RNase_PH_bact"/>
    <property type="match status" value="1"/>
</dbReference>
<dbReference type="FunFam" id="3.30.230.70:FF:000003">
    <property type="entry name" value="Ribonuclease PH"/>
    <property type="match status" value="1"/>
</dbReference>
<dbReference type="Gene3D" id="3.30.230.70">
    <property type="entry name" value="GHMP Kinase, N-terminal domain"/>
    <property type="match status" value="1"/>
</dbReference>
<dbReference type="HAMAP" id="MF_00564">
    <property type="entry name" value="RNase_PH"/>
    <property type="match status" value="1"/>
</dbReference>
<dbReference type="InterPro" id="IPR001247">
    <property type="entry name" value="ExoRNase_PH_dom1"/>
</dbReference>
<dbReference type="InterPro" id="IPR015847">
    <property type="entry name" value="ExoRNase_PH_dom2"/>
</dbReference>
<dbReference type="InterPro" id="IPR036345">
    <property type="entry name" value="ExoRNase_PH_dom2_sf"/>
</dbReference>
<dbReference type="InterPro" id="IPR027408">
    <property type="entry name" value="PNPase/RNase_PH_dom_sf"/>
</dbReference>
<dbReference type="InterPro" id="IPR020568">
    <property type="entry name" value="Ribosomal_Su5_D2-typ_SF"/>
</dbReference>
<dbReference type="InterPro" id="IPR050080">
    <property type="entry name" value="RNase_PH"/>
</dbReference>
<dbReference type="InterPro" id="IPR002381">
    <property type="entry name" value="RNase_PH_bac-type"/>
</dbReference>
<dbReference type="InterPro" id="IPR018336">
    <property type="entry name" value="RNase_PH_CS"/>
</dbReference>
<dbReference type="NCBIfam" id="TIGR01966">
    <property type="entry name" value="RNasePH"/>
    <property type="match status" value="1"/>
</dbReference>
<dbReference type="PANTHER" id="PTHR11953">
    <property type="entry name" value="EXOSOME COMPLEX COMPONENT"/>
    <property type="match status" value="1"/>
</dbReference>
<dbReference type="PANTHER" id="PTHR11953:SF0">
    <property type="entry name" value="EXOSOME COMPLEX COMPONENT RRP41"/>
    <property type="match status" value="1"/>
</dbReference>
<dbReference type="Pfam" id="PF01138">
    <property type="entry name" value="RNase_PH"/>
    <property type="match status" value="1"/>
</dbReference>
<dbReference type="Pfam" id="PF03725">
    <property type="entry name" value="RNase_PH_C"/>
    <property type="match status" value="1"/>
</dbReference>
<dbReference type="SUPFAM" id="SSF55666">
    <property type="entry name" value="Ribonuclease PH domain 2-like"/>
    <property type="match status" value="1"/>
</dbReference>
<dbReference type="SUPFAM" id="SSF54211">
    <property type="entry name" value="Ribosomal protein S5 domain 2-like"/>
    <property type="match status" value="1"/>
</dbReference>
<dbReference type="PROSITE" id="PS01277">
    <property type="entry name" value="RIBONUCLEASE_PH"/>
    <property type="match status" value="1"/>
</dbReference>
<proteinExistence type="inferred from homology"/>
<name>RNPH_TROWT</name>
<accession>Q83FT1</accession>
<reference key="1">
    <citation type="journal article" date="2003" name="Genome Res.">
        <title>Tropheryma whipplei twist: a human pathogenic Actinobacteria with a reduced genome.</title>
        <authorList>
            <person name="Raoult D."/>
            <person name="Ogata H."/>
            <person name="Audic S."/>
            <person name="Robert C."/>
            <person name="Suhre K."/>
            <person name="Drancourt M."/>
            <person name="Claverie J.-M."/>
        </authorList>
    </citation>
    <scope>NUCLEOTIDE SEQUENCE [LARGE SCALE GENOMIC DNA]</scope>
    <source>
        <strain>Twist</strain>
    </source>
</reference>
<organism>
    <name type="scientific">Tropheryma whipplei (strain Twist)</name>
    <name type="common">Whipple's bacillus</name>
    <dbReference type="NCBI Taxonomy" id="203267"/>
    <lineage>
        <taxon>Bacteria</taxon>
        <taxon>Bacillati</taxon>
        <taxon>Actinomycetota</taxon>
        <taxon>Actinomycetes</taxon>
        <taxon>Micrococcales</taxon>
        <taxon>Tropherymataceae</taxon>
        <taxon>Tropheryma</taxon>
    </lineage>
</organism>
<comment type="function">
    <text evidence="1">Phosphorolytic 3'-5' exoribonuclease that plays an important role in tRNA 3'-end maturation. Removes nucleotide residues following the 3'-CCA terminus of tRNAs; can also add nucleotides to the ends of RNA molecules by using nucleoside diphosphates as substrates, but this may not be physiologically important. Probably plays a role in initiation of 16S rRNA degradation (leading to ribosome degradation) during starvation.</text>
</comment>
<comment type="catalytic activity">
    <reaction evidence="1">
        <text>tRNA(n+1) + phosphate = tRNA(n) + a ribonucleoside 5'-diphosphate</text>
        <dbReference type="Rhea" id="RHEA:10628"/>
        <dbReference type="Rhea" id="RHEA-COMP:17343"/>
        <dbReference type="Rhea" id="RHEA-COMP:17344"/>
        <dbReference type="ChEBI" id="CHEBI:43474"/>
        <dbReference type="ChEBI" id="CHEBI:57930"/>
        <dbReference type="ChEBI" id="CHEBI:173114"/>
        <dbReference type="EC" id="2.7.7.56"/>
    </reaction>
</comment>
<comment type="subunit">
    <text evidence="1">Homohexameric ring arranged as a trimer of dimers.</text>
</comment>
<comment type="similarity">
    <text evidence="1">Belongs to the RNase PH family.</text>
</comment>
<comment type="sequence caution" evidence="2">
    <conflict type="erroneous initiation">
        <sequence resource="EMBL-CDS" id="AAO44719"/>
    </conflict>
    <text>Extended N-terminus.</text>
</comment>
<feature type="chain" id="PRO_0000139946" description="Ribonuclease PH">
    <location>
        <begin position="1"/>
        <end position="247"/>
    </location>
</feature>
<feature type="binding site" evidence="1">
    <location>
        <position position="96"/>
    </location>
    <ligand>
        <name>phosphate</name>
        <dbReference type="ChEBI" id="CHEBI:43474"/>
        <note>substrate</note>
    </ligand>
</feature>
<feature type="binding site" evidence="1">
    <location>
        <begin position="134"/>
        <end position="136"/>
    </location>
    <ligand>
        <name>phosphate</name>
        <dbReference type="ChEBI" id="CHEBI:43474"/>
        <note>substrate</note>
    </ligand>
</feature>
<protein>
    <recommendedName>
        <fullName evidence="1">Ribonuclease PH</fullName>
        <shortName evidence="1">RNase PH</shortName>
        <ecNumber evidence="1">2.7.7.56</ecNumber>
    </recommendedName>
    <alternativeName>
        <fullName evidence="1">tRNA nucleotidyltransferase</fullName>
    </alternativeName>
</protein>
<evidence type="ECO:0000255" key="1">
    <source>
        <dbReference type="HAMAP-Rule" id="MF_00564"/>
    </source>
</evidence>
<evidence type="ECO:0000305" key="2"/>
<gene>
    <name evidence="1" type="primary">rph</name>
    <name type="ordered locus">TWT_622</name>
</gene>
<sequence>MLFCCIICSVLRKNSRAHDEIRPVKIIRGWNIYAEGSALIAFGNTRVLCNATFQRGVPPFLRGQRSGWITAEYAMLPRSGTERSDRESVKGKISGRSHEISRLIGRSMRAILDRYALEENTIILDCDVLQADGGTRTAAITGSYIALYDALVWAKNQKILSKHPLTDSVSAVSVGLVGDQIFLDLDYSEDSNAQADINLVFTGSGKLVEIQGTAEKSPFSYGQFEQMMELAKTGCQALKEIQAASLD</sequence>